<proteinExistence type="inferred from homology"/>
<sequence length="498" mass="53817">MRTNPTTSRPGVSTIEEKSTGRIDQIIGPVLDVTFPPGKLPYIYNALVVQSIDTANKQINVTCEVQQLLGNNRVRAVAMSATDGLMRGMEVIDTGAPLSVPVGGATLGRIFNVLGEPVDNLGPVDSSATFPIHRSAPAFIELDTKLSIFETGIKVVDLLAPYRRGGKIGLFGGAGVGKTVLIMELINNIAKAHGGVSVFGGVGERTREGNDLYMEMKESGVINEKNIEESKVALVYGQMNEPPGARMRVGLTALTMAEYFRDVNKQDVLLFIDNIFRFVQAGSEVSALLGRMPSAVGYQPTLSTEMGSLQERIASTKKGSITSIQAVYVPADDLTDPAPATTFAHLDATTVLSRGLASKGIYPAVDPLDSTSTMLQPRIVGNEHYETAQRVKETLQRYKELQDIIAILGLDELSEEDRLTVARARKIERFLSQPFFVAEVFTGSAGKYVGLAETIRGFQLILSGELDGLPEQAFYLVGNIDEASTKAITLEEENKSKK</sequence>
<name>ATPB_LOLPR</name>
<reference key="1">
    <citation type="journal article" date="2008" name="PLoS ONE">
        <title>An optimized chloroplast DNA extraction protocol for grasses (Poaceae) proves suitable for whole plastid genome sequencing and SNP detection.</title>
        <authorList>
            <person name="Diekmann K."/>
            <person name="Hodkinson T.R."/>
            <person name="Fricke E."/>
            <person name="Barth S."/>
        </authorList>
    </citation>
    <scope>NUCLEOTIDE SEQUENCE [LARGE SCALE GENOMIC DNA]</scope>
    <source>
        <strain>cv. Cashel</strain>
    </source>
</reference>
<protein>
    <recommendedName>
        <fullName evidence="1">ATP synthase subunit beta, chloroplastic</fullName>
        <ecNumber evidence="1">7.1.2.2</ecNumber>
    </recommendedName>
    <alternativeName>
        <fullName evidence="1">ATP synthase F1 sector subunit beta</fullName>
    </alternativeName>
    <alternativeName>
        <fullName evidence="1">F-ATPase subunit beta</fullName>
    </alternativeName>
</protein>
<evidence type="ECO:0000255" key="1">
    <source>
        <dbReference type="HAMAP-Rule" id="MF_01347"/>
    </source>
</evidence>
<accession>A8Y9H7</accession>
<feature type="chain" id="PRO_0000339627" description="ATP synthase subunit beta, chloroplastic">
    <location>
        <begin position="1"/>
        <end position="498"/>
    </location>
</feature>
<feature type="binding site" evidence="1">
    <location>
        <begin position="172"/>
        <end position="179"/>
    </location>
    <ligand>
        <name>ATP</name>
        <dbReference type="ChEBI" id="CHEBI:30616"/>
    </ligand>
</feature>
<comment type="function">
    <text evidence="1">Produces ATP from ADP in the presence of a proton gradient across the membrane. The catalytic sites are hosted primarily by the beta subunits.</text>
</comment>
<comment type="catalytic activity">
    <reaction evidence="1">
        <text>ATP + H2O + 4 H(+)(in) = ADP + phosphate + 5 H(+)(out)</text>
        <dbReference type="Rhea" id="RHEA:57720"/>
        <dbReference type="ChEBI" id="CHEBI:15377"/>
        <dbReference type="ChEBI" id="CHEBI:15378"/>
        <dbReference type="ChEBI" id="CHEBI:30616"/>
        <dbReference type="ChEBI" id="CHEBI:43474"/>
        <dbReference type="ChEBI" id="CHEBI:456216"/>
        <dbReference type="EC" id="7.1.2.2"/>
    </reaction>
</comment>
<comment type="subunit">
    <text evidence="1">F-type ATPases have 2 components, CF(1) - the catalytic core - and CF(0) - the membrane proton channel. CF(1) has five subunits: alpha(3), beta(3), gamma(1), delta(1), epsilon(1). CF(0) has four main subunits: a(1), b(1), b'(1) and c(9-12).</text>
</comment>
<comment type="subcellular location">
    <subcellularLocation>
        <location evidence="1">Plastid</location>
        <location evidence="1">Chloroplast thylakoid membrane</location>
        <topology evidence="1">Peripheral membrane protein</topology>
    </subcellularLocation>
</comment>
<comment type="similarity">
    <text evidence="1">Belongs to the ATPase alpha/beta chains family.</text>
</comment>
<organism>
    <name type="scientific">Lolium perenne</name>
    <name type="common">Perennial ryegrass</name>
    <dbReference type="NCBI Taxonomy" id="4522"/>
    <lineage>
        <taxon>Eukaryota</taxon>
        <taxon>Viridiplantae</taxon>
        <taxon>Streptophyta</taxon>
        <taxon>Embryophyta</taxon>
        <taxon>Tracheophyta</taxon>
        <taxon>Spermatophyta</taxon>
        <taxon>Magnoliopsida</taxon>
        <taxon>Liliopsida</taxon>
        <taxon>Poales</taxon>
        <taxon>Poaceae</taxon>
        <taxon>BOP clade</taxon>
        <taxon>Pooideae</taxon>
        <taxon>Poodae</taxon>
        <taxon>Poeae</taxon>
        <taxon>Poeae Chloroplast Group 2 (Poeae type)</taxon>
        <taxon>Loliodinae</taxon>
        <taxon>Loliinae</taxon>
        <taxon>Lolium</taxon>
    </lineage>
</organism>
<keyword id="KW-0066">ATP synthesis</keyword>
<keyword id="KW-0067">ATP-binding</keyword>
<keyword id="KW-0139">CF(1)</keyword>
<keyword id="KW-0150">Chloroplast</keyword>
<keyword id="KW-0375">Hydrogen ion transport</keyword>
<keyword id="KW-0406">Ion transport</keyword>
<keyword id="KW-0472">Membrane</keyword>
<keyword id="KW-0547">Nucleotide-binding</keyword>
<keyword id="KW-0934">Plastid</keyword>
<keyword id="KW-0793">Thylakoid</keyword>
<keyword id="KW-1278">Translocase</keyword>
<keyword id="KW-0813">Transport</keyword>
<gene>
    <name evidence="1" type="primary">atpB</name>
    <name type="ordered locus">LopeCp047</name>
</gene>
<geneLocation type="chloroplast"/>
<dbReference type="EC" id="7.1.2.2" evidence="1"/>
<dbReference type="EMBL" id="AM777385">
    <property type="protein sequence ID" value="CAO85983.1"/>
    <property type="molecule type" value="Genomic_DNA"/>
</dbReference>
<dbReference type="RefSeq" id="YP_001531290.1">
    <property type="nucleotide sequence ID" value="NC_009950.1"/>
</dbReference>
<dbReference type="SMR" id="A8Y9H7"/>
<dbReference type="GeneID" id="5696631"/>
<dbReference type="KEGG" id="lper:5696631"/>
<dbReference type="OrthoDB" id="651731at2759"/>
<dbReference type="GO" id="GO:0009535">
    <property type="term" value="C:chloroplast thylakoid membrane"/>
    <property type="evidence" value="ECO:0007669"/>
    <property type="project" value="UniProtKB-SubCell"/>
</dbReference>
<dbReference type="GO" id="GO:0005739">
    <property type="term" value="C:mitochondrion"/>
    <property type="evidence" value="ECO:0007669"/>
    <property type="project" value="GOC"/>
</dbReference>
<dbReference type="GO" id="GO:0045259">
    <property type="term" value="C:proton-transporting ATP synthase complex"/>
    <property type="evidence" value="ECO:0007669"/>
    <property type="project" value="UniProtKB-KW"/>
</dbReference>
<dbReference type="GO" id="GO:0005524">
    <property type="term" value="F:ATP binding"/>
    <property type="evidence" value="ECO:0007669"/>
    <property type="project" value="UniProtKB-UniRule"/>
</dbReference>
<dbReference type="GO" id="GO:0016887">
    <property type="term" value="F:ATP hydrolysis activity"/>
    <property type="evidence" value="ECO:0007669"/>
    <property type="project" value="InterPro"/>
</dbReference>
<dbReference type="GO" id="GO:0046933">
    <property type="term" value="F:proton-transporting ATP synthase activity, rotational mechanism"/>
    <property type="evidence" value="ECO:0007669"/>
    <property type="project" value="UniProtKB-UniRule"/>
</dbReference>
<dbReference type="GO" id="GO:0042776">
    <property type="term" value="P:proton motive force-driven mitochondrial ATP synthesis"/>
    <property type="evidence" value="ECO:0007669"/>
    <property type="project" value="TreeGrafter"/>
</dbReference>
<dbReference type="CDD" id="cd18110">
    <property type="entry name" value="ATP-synt_F1_beta_C"/>
    <property type="match status" value="1"/>
</dbReference>
<dbReference type="CDD" id="cd18115">
    <property type="entry name" value="ATP-synt_F1_beta_N"/>
    <property type="match status" value="1"/>
</dbReference>
<dbReference type="CDD" id="cd01133">
    <property type="entry name" value="F1-ATPase_beta_CD"/>
    <property type="match status" value="1"/>
</dbReference>
<dbReference type="FunFam" id="1.10.1140.10:FF:000001">
    <property type="entry name" value="ATP synthase subunit beta"/>
    <property type="match status" value="1"/>
</dbReference>
<dbReference type="FunFam" id="3.40.50.300:FF:000026">
    <property type="entry name" value="ATP synthase subunit beta"/>
    <property type="match status" value="1"/>
</dbReference>
<dbReference type="FunFam" id="2.40.10.170:FF:000002">
    <property type="entry name" value="ATP synthase subunit beta, chloroplastic"/>
    <property type="match status" value="1"/>
</dbReference>
<dbReference type="Gene3D" id="2.40.10.170">
    <property type="match status" value="1"/>
</dbReference>
<dbReference type="Gene3D" id="1.10.1140.10">
    <property type="entry name" value="Bovine Mitochondrial F1-atpase, Atp Synthase Beta Chain, Chain D, domain 3"/>
    <property type="match status" value="1"/>
</dbReference>
<dbReference type="Gene3D" id="3.40.50.300">
    <property type="entry name" value="P-loop containing nucleotide triphosphate hydrolases"/>
    <property type="match status" value="1"/>
</dbReference>
<dbReference type="HAMAP" id="MF_01347">
    <property type="entry name" value="ATP_synth_beta_bact"/>
    <property type="match status" value="1"/>
</dbReference>
<dbReference type="InterPro" id="IPR003593">
    <property type="entry name" value="AAA+_ATPase"/>
</dbReference>
<dbReference type="InterPro" id="IPR055190">
    <property type="entry name" value="ATP-synt_VA_C"/>
</dbReference>
<dbReference type="InterPro" id="IPR005722">
    <property type="entry name" value="ATP_synth_F1_bsu"/>
</dbReference>
<dbReference type="InterPro" id="IPR020003">
    <property type="entry name" value="ATPase_a/bsu_AS"/>
</dbReference>
<dbReference type="InterPro" id="IPR050053">
    <property type="entry name" value="ATPase_alpha/beta_chains"/>
</dbReference>
<dbReference type="InterPro" id="IPR004100">
    <property type="entry name" value="ATPase_F1/V1/A1_a/bsu_N"/>
</dbReference>
<dbReference type="InterPro" id="IPR036121">
    <property type="entry name" value="ATPase_F1/V1/A1_a/bsu_N_sf"/>
</dbReference>
<dbReference type="InterPro" id="IPR000194">
    <property type="entry name" value="ATPase_F1/V1/A1_a/bsu_nucl-bd"/>
</dbReference>
<dbReference type="InterPro" id="IPR024034">
    <property type="entry name" value="ATPase_F1/V1_b/a_C"/>
</dbReference>
<dbReference type="InterPro" id="IPR027417">
    <property type="entry name" value="P-loop_NTPase"/>
</dbReference>
<dbReference type="NCBIfam" id="TIGR01039">
    <property type="entry name" value="atpD"/>
    <property type="match status" value="1"/>
</dbReference>
<dbReference type="PANTHER" id="PTHR15184">
    <property type="entry name" value="ATP SYNTHASE"/>
    <property type="match status" value="1"/>
</dbReference>
<dbReference type="PANTHER" id="PTHR15184:SF71">
    <property type="entry name" value="ATP SYNTHASE SUBUNIT BETA, MITOCHONDRIAL"/>
    <property type="match status" value="1"/>
</dbReference>
<dbReference type="Pfam" id="PF00006">
    <property type="entry name" value="ATP-synt_ab"/>
    <property type="match status" value="1"/>
</dbReference>
<dbReference type="Pfam" id="PF02874">
    <property type="entry name" value="ATP-synt_ab_N"/>
    <property type="match status" value="1"/>
</dbReference>
<dbReference type="Pfam" id="PF22919">
    <property type="entry name" value="ATP-synt_VA_C"/>
    <property type="match status" value="1"/>
</dbReference>
<dbReference type="SMART" id="SM00382">
    <property type="entry name" value="AAA"/>
    <property type="match status" value="1"/>
</dbReference>
<dbReference type="SUPFAM" id="SSF47917">
    <property type="entry name" value="C-terminal domain of alpha and beta subunits of F1 ATP synthase"/>
    <property type="match status" value="1"/>
</dbReference>
<dbReference type="SUPFAM" id="SSF50615">
    <property type="entry name" value="N-terminal domain of alpha and beta subunits of F1 ATP synthase"/>
    <property type="match status" value="1"/>
</dbReference>
<dbReference type="SUPFAM" id="SSF52540">
    <property type="entry name" value="P-loop containing nucleoside triphosphate hydrolases"/>
    <property type="match status" value="1"/>
</dbReference>
<dbReference type="PROSITE" id="PS00152">
    <property type="entry name" value="ATPASE_ALPHA_BETA"/>
    <property type="match status" value="1"/>
</dbReference>